<dbReference type="EMBL" id="AJ235271">
    <property type="protein sequence ID" value="CAA14820.1"/>
    <property type="status" value="ALT_INIT"/>
    <property type="molecule type" value="Genomic_DNA"/>
</dbReference>
<dbReference type="PIR" id="B71693">
    <property type="entry name" value="B71693"/>
</dbReference>
<dbReference type="RefSeq" id="NP_220744.2">
    <property type="nucleotide sequence ID" value="NC_000963.1"/>
</dbReference>
<dbReference type="RefSeq" id="WP_004597501.1">
    <property type="nucleotide sequence ID" value="NC_000963.1"/>
</dbReference>
<dbReference type="SMR" id="Q9ZDG8"/>
<dbReference type="STRING" id="272947.gene:17555441"/>
<dbReference type="EnsemblBacteria" id="CAA14820">
    <property type="protein sequence ID" value="CAA14820"/>
    <property type="gene ID" value="CAA14820"/>
</dbReference>
<dbReference type="GeneID" id="57569487"/>
<dbReference type="KEGG" id="rpr:RP361"/>
<dbReference type="PATRIC" id="fig|272947.5.peg.370"/>
<dbReference type="eggNOG" id="COG4974">
    <property type="taxonomic scope" value="Bacteria"/>
</dbReference>
<dbReference type="HOGENOM" id="CLU_027562_9_0_5"/>
<dbReference type="OrthoDB" id="9801717at2"/>
<dbReference type="Proteomes" id="UP000002480">
    <property type="component" value="Chromosome"/>
</dbReference>
<dbReference type="GO" id="GO:0005737">
    <property type="term" value="C:cytoplasm"/>
    <property type="evidence" value="ECO:0007669"/>
    <property type="project" value="UniProtKB-SubCell"/>
</dbReference>
<dbReference type="GO" id="GO:0003677">
    <property type="term" value="F:DNA binding"/>
    <property type="evidence" value="ECO:0007669"/>
    <property type="project" value="UniProtKB-KW"/>
</dbReference>
<dbReference type="GO" id="GO:0009037">
    <property type="term" value="F:tyrosine-based site-specific recombinase activity"/>
    <property type="evidence" value="ECO:0007669"/>
    <property type="project" value="UniProtKB-UniRule"/>
</dbReference>
<dbReference type="GO" id="GO:0051301">
    <property type="term" value="P:cell division"/>
    <property type="evidence" value="ECO:0007669"/>
    <property type="project" value="UniProtKB-KW"/>
</dbReference>
<dbReference type="GO" id="GO:0007059">
    <property type="term" value="P:chromosome segregation"/>
    <property type="evidence" value="ECO:0007669"/>
    <property type="project" value="UniProtKB-UniRule"/>
</dbReference>
<dbReference type="GO" id="GO:0006313">
    <property type="term" value="P:DNA transposition"/>
    <property type="evidence" value="ECO:0007669"/>
    <property type="project" value="UniProtKB-UniRule"/>
</dbReference>
<dbReference type="CDD" id="cd00798">
    <property type="entry name" value="INT_XerDC_C"/>
    <property type="match status" value="1"/>
</dbReference>
<dbReference type="Gene3D" id="1.10.150.130">
    <property type="match status" value="1"/>
</dbReference>
<dbReference type="Gene3D" id="1.10.443.10">
    <property type="entry name" value="Intergrase catalytic core"/>
    <property type="match status" value="1"/>
</dbReference>
<dbReference type="HAMAP" id="MF_01808">
    <property type="entry name" value="Recomb_XerC_XerD"/>
    <property type="match status" value="1"/>
</dbReference>
<dbReference type="HAMAP" id="MF_01807">
    <property type="entry name" value="Recomb_XerD"/>
    <property type="match status" value="1"/>
</dbReference>
<dbReference type="InterPro" id="IPR044068">
    <property type="entry name" value="CB"/>
</dbReference>
<dbReference type="InterPro" id="IPR011010">
    <property type="entry name" value="DNA_brk_join_enz"/>
</dbReference>
<dbReference type="InterPro" id="IPR013762">
    <property type="entry name" value="Integrase-like_cat_sf"/>
</dbReference>
<dbReference type="InterPro" id="IPR002104">
    <property type="entry name" value="Integrase_catalytic"/>
</dbReference>
<dbReference type="InterPro" id="IPR010998">
    <property type="entry name" value="Integrase_recombinase_N"/>
</dbReference>
<dbReference type="InterPro" id="IPR004107">
    <property type="entry name" value="Integrase_SAM-like_N"/>
</dbReference>
<dbReference type="InterPro" id="IPR011932">
    <property type="entry name" value="Recomb_XerD"/>
</dbReference>
<dbReference type="InterPro" id="IPR023009">
    <property type="entry name" value="Tyrosine_recombinase_XerC/XerD"/>
</dbReference>
<dbReference type="InterPro" id="IPR050090">
    <property type="entry name" value="Tyrosine_recombinase_XerCD"/>
</dbReference>
<dbReference type="NCBIfam" id="NF001399">
    <property type="entry name" value="PRK00283.1"/>
    <property type="match status" value="1"/>
</dbReference>
<dbReference type="NCBIfam" id="TIGR02225">
    <property type="entry name" value="recomb_XerD"/>
    <property type="match status" value="1"/>
</dbReference>
<dbReference type="PANTHER" id="PTHR30349">
    <property type="entry name" value="PHAGE INTEGRASE-RELATED"/>
    <property type="match status" value="1"/>
</dbReference>
<dbReference type="PANTHER" id="PTHR30349:SF81">
    <property type="entry name" value="TYROSINE RECOMBINASE XERC"/>
    <property type="match status" value="1"/>
</dbReference>
<dbReference type="Pfam" id="PF02899">
    <property type="entry name" value="Phage_int_SAM_1"/>
    <property type="match status" value="1"/>
</dbReference>
<dbReference type="Pfam" id="PF00589">
    <property type="entry name" value="Phage_integrase"/>
    <property type="match status" value="1"/>
</dbReference>
<dbReference type="SUPFAM" id="SSF56349">
    <property type="entry name" value="DNA breaking-rejoining enzymes"/>
    <property type="match status" value="1"/>
</dbReference>
<dbReference type="PROSITE" id="PS51900">
    <property type="entry name" value="CB"/>
    <property type="match status" value="1"/>
</dbReference>
<dbReference type="PROSITE" id="PS51898">
    <property type="entry name" value="TYR_RECOMBINASE"/>
    <property type="match status" value="1"/>
</dbReference>
<feature type="chain" id="PRO_0000095411" description="Tyrosine recombinase XerD">
    <location>
        <begin position="1"/>
        <end position="311"/>
    </location>
</feature>
<feature type="domain" description="Core-binding (CB)" evidence="3">
    <location>
        <begin position="1"/>
        <end position="83"/>
    </location>
</feature>
<feature type="domain" description="Tyr recombinase" evidence="2">
    <location>
        <begin position="104"/>
        <end position="299"/>
    </location>
</feature>
<feature type="active site" evidence="1">
    <location>
        <position position="145"/>
    </location>
</feature>
<feature type="active site" evidence="1">
    <location>
        <position position="176"/>
    </location>
</feature>
<feature type="active site" evidence="1">
    <location>
        <position position="251"/>
    </location>
</feature>
<feature type="active site" evidence="1">
    <location>
        <position position="254"/>
    </location>
</feature>
<feature type="active site" evidence="1">
    <location>
        <position position="277"/>
    </location>
</feature>
<feature type="active site" description="O-(3'-phospho-DNA)-tyrosine intermediate" evidence="1">
    <location>
        <position position="286"/>
    </location>
</feature>
<evidence type="ECO:0000255" key="1">
    <source>
        <dbReference type="HAMAP-Rule" id="MF_01807"/>
    </source>
</evidence>
<evidence type="ECO:0000255" key="2">
    <source>
        <dbReference type="PROSITE-ProRule" id="PRU01246"/>
    </source>
</evidence>
<evidence type="ECO:0000255" key="3">
    <source>
        <dbReference type="PROSITE-ProRule" id="PRU01248"/>
    </source>
</evidence>
<evidence type="ECO:0000305" key="4"/>
<comment type="function">
    <text evidence="1">Site-specific tyrosine recombinase, which acts by catalyzing the cutting and rejoining of the recombining DNA molecules. The XerC-XerD complex is essential to convert dimers of the bacterial chromosome into monomers to permit their segregation at cell division. It also contributes to the segregational stability of plasmids.</text>
</comment>
<comment type="subunit">
    <text evidence="1">Forms a cyclic heterotetrameric complex composed of two molecules of XerC and two molecules of XerD.</text>
</comment>
<comment type="subcellular location">
    <subcellularLocation>
        <location evidence="1">Cytoplasm</location>
    </subcellularLocation>
</comment>
<comment type="similarity">
    <text evidence="1">Belongs to the 'phage' integrase family. XerD subfamily.</text>
</comment>
<comment type="sequence caution" evidence="4">
    <conflict type="erroneous initiation">
        <sequence resource="EMBL-CDS" id="CAA14820"/>
    </conflict>
</comment>
<reference key="1">
    <citation type="journal article" date="1998" name="Nature">
        <title>The genome sequence of Rickettsia prowazekii and the origin of mitochondria.</title>
        <authorList>
            <person name="Andersson S.G.E."/>
            <person name="Zomorodipour A."/>
            <person name="Andersson J.O."/>
            <person name="Sicheritz-Ponten T."/>
            <person name="Alsmark U.C.M."/>
            <person name="Podowski R.M."/>
            <person name="Naeslund A.K."/>
            <person name="Eriksson A.-S."/>
            <person name="Winkler H.H."/>
            <person name="Kurland C.G."/>
        </authorList>
    </citation>
    <scope>NUCLEOTIDE SEQUENCE [LARGE SCALE GENOMIC DNA]</scope>
    <source>
        <strain>Madrid E</strain>
    </source>
</reference>
<gene>
    <name evidence="1" type="primary">xerD</name>
    <name type="ordered locus">RP361</name>
</gene>
<name>XERD_RICPR</name>
<protein>
    <recommendedName>
        <fullName evidence="1">Tyrosine recombinase XerD</fullName>
    </recommendedName>
</protein>
<accession>Q9ZDG8</accession>
<proteinExistence type="inferred from homology"/>
<organism>
    <name type="scientific">Rickettsia prowazekii (strain Madrid E)</name>
    <dbReference type="NCBI Taxonomy" id="272947"/>
    <lineage>
        <taxon>Bacteria</taxon>
        <taxon>Pseudomonadati</taxon>
        <taxon>Pseudomonadota</taxon>
        <taxon>Alphaproteobacteria</taxon>
        <taxon>Rickettsiales</taxon>
        <taxon>Rickettsiaceae</taxon>
        <taxon>Rickettsieae</taxon>
        <taxon>Rickettsia</taxon>
        <taxon>typhus group</taxon>
    </lineage>
</organism>
<keyword id="KW-0131">Cell cycle</keyword>
<keyword id="KW-0132">Cell division</keyword>
<keyword id="KW-0159">Chromosome partition</keyword>
<keyword id="KW-0963">Cytoplasm</keyword>
<keyword id="KW-0229">DNA integration</keyword>
<keyword id="KW-0233">DNA recombination</keyword>
<keyword id="KW-0238">DNA-binding</keyword>
<keyword id="KW-1185">Reference proteome</keyword>
<sequence>MEFIAQFLEMLLAERALSKNSILSYKRDLLDFQHYLAAQKISELNITTGNIRKWIEYLASNNLHARSINRKISTIKSYYAFLISENHTKFNPVLNIDLPKYQNKLPIILSIDQIKLILEYCSKDNTPEGIRLNAMINLLYASGLRVSELVSLKLADILTNNTSKGTVRKIFSVLGKGNKERVIVINDQAVLSIIKYLEIRDFFINKAKSKNLIYLFPSSAVAGYMTRQNFAILLKSVALYTGLNPEHVSPHILRHSFASHLLEGGADLRVIQELLGHADISTTQIYTHLHTNHLKKALLHHPLNKNSFILS</sequence>